<keyword id="KW-0963">Cytoplasm</keyword>
<keyword id="KW-0396">Initiation factor</keyword>
<keyword id="KW-0648">Protein biosynthesis</keyword>
<keyword id="KW-1185">Reference proteome</keyword>
<keyword id="KW-0694">RNA-binding</keyword>
<evidence type="ECO:0000250" key="1">
    <source>
        <dbReference type="UniProtKB" id="Q9VDM6"/>
    </source>
</evidence>
<evidence type="ECO:0000255" key="2">
    <source>
        <dbReference type="HAMAP-Rule" id="MF_03006"/>
    </source>
</evidence>
<proteinExistence type="inferred from homology"/>
<protein>
    <recommendedName>
        <fullName evidence="1">Eukaryotic translation initiation factor 3 subunit G-2</fullName>
    </recommendedName>
    <alternativeName>
        <fullName evidence="2">Eukaryotic translation initiation factor 3 RNA-binding subunit 2</fullName>
        <shortName evidence="2">eIF-3 RNA-binding subunit 2</shortName>
    </alternativeName>
    <alternativeName>
        <fullName evidence="2">Eukaryotic translation initiation factor 3 subunit 4-2</fullName>
    </alternativeName>
</protein>
<dbReference type="EMBL" id="CH933806">
    <property type="protein sequence ID" value="EDW16446.1"/>
    <property type="molecule type" value="Genomic_DNA"/>
</dbReference>
<dbReference type="SMR" id="B4K7S5"/>
<dbReference type="FunCoup" id="B4K7S5">
    <property type="interactions" value="1126"/>
</dbReference>
<dbReference type="EnsemblMetazoa" id="FBtr0172957">
    <property type="protein sequence ID" value="FBpp0171449"/>
    <property type="gene ID" value="FBgn0144960"/>
</dbReference>
<dbReference type="EnsemblMetazoa" id="XM_002000949.4">
    <property type="protein sequence ID" value="XP_002000985.1"/>
    <property type="gene ID" value="LOC6574958"/>
</dbReference>
<dbReference type="GeneID" id="6574958"/>
<dbReference type="KEGG" id="dmo:Dmoj_GI22232"/>
<dbReference type="CTD" id="42422"/>
<dbReference type="eggNOG" id="KOG0122">
    <property type="taxonomic scope" value="Eukaryota"/>
</dbReference>
<dbReference type="HOGENOM" id="CLU_034595_0_0_1"/>
<dbReference type="InParanoid" id="B4K7S5"/>
<dbReference type="OMA" id="EEVHMVF"/>
<dbReference type="OrthoDB" id="639027at2759"/>
<dbReference type="PhylomeDB" id="B4K7S5"/>
<dbReference type="Proteomes" id="UP000009192">
    <property type="component" value="Unassembled WGS sequence"/>
</dbReference>
<dbReference type="GO" id="GO:0016282">
    <property type="term" value="C:eukaryotic 43S preinitiation complex"/>
    <property type="evidence" value="ECO:0007669"/>
    <property type="project" value="UniProtKB-UniRule"/>
</dbReference>
<dbReference type="GO" id="GO:0033290">
    <property type="term" value="C:eukaryotic 48S preinitiation complex"/>
    <property type="evidence" value="ECO:0007669"/>
    <property type="project" value="UniProtKB-UniRule"/>
</dbReference>
<dbReference type="GO" id="GO:0005852">
    <property type="term" value="C:eukaryotic translation initiation factor 3 complex"/>
    <property type="evidence" value="ECO:0007669"/>
    <property type="project" value="UniProtKB-UniRule"/>
</dbReference>
<dbReference type="GO" id="GO:0003723">
    <property type="term" value="F:RNA binding"/>
    <property type="evidence" value="ECO:0007669"/>
    <property type="project" value="UniProtKB-UniRule"/>
</dbReference>
<dbReference type="GO" id="GO:0003743">
    <property type="term" value="F:translation initiation factor activity"/>
    <property type="evidence" value="ECO:0007669"/>
    <property type="project" value="UniProtKB-UniRule"/>
</dbReference>
<dbReference type="GO" id="GO:0001732">
    <property type="term" value="P:formation of cytoplasmic translation initiation complex"/>
    <property type="evidence" value="ECO:0007669"/>
    <property type="project" value="UniProtKB-UniRule"/>
</dbReference>
<dbReference type="CDD" id="cd12933">
    <property type="entry name" value="eIF3G"/>
    <property type="match status" value="1"/>
</dbReference>
<dbReference type="CDD" id="cd12408">
    <property type="entry name" value="RRM_eIF3G_like"/>
    <property type="match status" value="1"/>
</dbReference>
<dbReference type="Gene3D" id="3.30.70.330">
    <property type="match status" value="1"/>
</dbReference>
<dbReference type="HAMAP" id="MF_03006">
    <property type="entry name" value="eIF3g"/>
    <property type="match status" value="1"/>
</dbReference>
<dbReference type="InterPro" id="IPR017334">
    <property type="entry name" value="eIF3_g"/>
</dbReference>
<dbReference type="InterPro" id="IPR024675">
    <property type="entry name" value="eIF3g_N"/>
</dbReference>
<dbReference type="InterPro" id="IPR034240">
    <property type="entry name" value="eIF3G_RRM"/>
</dbReference>
<dbReference type="InterPro" id="IPR012677">
    <property type="entry name" value="Nucleotide-bd_a/b_plait_sf"/>
</dbReference>
<dbReference type="InterPro" id="IPR035979">
    <property type="entry name" value="RBD_domain_sf"/>
</dbReference>
<dbReference type="InterPro" id="IPR000504">
    <property type="entry name" value="RRM_dom"/>
</dbReference>
<dbReference type="PANTHER" id="PTHR10352">
    <property type="entry name" value="EUKARYOTIC TRANSLATION INITIATION FACTOR 3 SUBUNIT G"/>
    <property type="match status" value="1"/>
</dbReference>
<dbReference type="Pfam" id="PF12353">
    <property type="entry name" value="eIF3g"/>
    <property type="match status" value="1"/>
</dbReference>
<dbReference type="Pfam" id="PF00076">
    <property type="entry name" value="RRM_1"/>
    <property type="match status" value="1"/>
</dbReference>
<dbReference type="PIRSF" id="PIRSF037949">
    <property type="entry name" value="Transl_init_eIF-3_RNA-bind"/>
    <property type="match status" value="1"/>
</dbReference>
<dbReference type="SMART" id="SM00360">
    <property type="entry name" value="RRM"/>
    <property type="match status" value="1"/>
</dbReference>
<dbReference type="SUPFAM" id="SSF54928">
    <property type="entry name" value="RNA-binding domain, RBD"/>
    <property type="match status" value="1"/>
</dbReference>
<dbReference type="PROSITE" id="PS50102">
    <property type="entry name" value="RRM"/>
    <property type="match status" value="1"/>
</dbReference>
<name>EI3G2_DROMO</name>
<feature type="chain" id="PRO_0000365416" description="Eukaryotic translation initiation factor 3 subunit G-2">
    <location>
        <begin position="1"/>
        <end position="259"/>
    </location>
</feature>
<feature type="domain" description="RRM" evidence="2">
    <location>
        <begin position="179"/>
        <end position="257"/>
    </location>
</feature>
<organism>
    <name type="scientific">Drosophila mojavensis</name>
    <name type="common">Fruit fly</name>
    <dbReference type="NCBI Taxonomy" id="7230"/>
    <lineage>
        <taxon>Eukaryota</taxon>
        <taxon>Metazoa</taxon>
        <taxon>Ecdysozoa</taxon>
        <taxon>Arthropoda</taxon>
        <taxon>Hexapoda</taxon>
        <taxon>Insecta</taxon>
        <taxon>Pterygota</taxon>
        <taxon>Neoptera</taxon>
        <taxon>Endopterygota</taxon>
        <taxon>Diptera</taxon>
        <taxon>Brachycera</taxon>
        <taxon>Muscomorpha</taxon>
        <taxon>Ephydroidea</taxon>
        <taxon>Drosophilidae</taxon>
        <taxon>Drosophila</taxon>
    </lineage>
</organism>
<comment type="function">
    <text evidence="2">RNA-binding component of the eukaryotic translation initiation factor 3 (eIF-3) complex, which is involved in protein synthesis of a specialized repertoire of mRNAs and, together with other initiation factors, stimulates binding of mRNA and methionyl-tRNAi to the 40S ribosome. The eIF-3 complex specifically targets and initiates translation of a subset of mRNAs involved in cell proliferation. This subunit can bind 18S rRNA.</text>
</comment>
<comment type="subunit">
    <text evidence="2">Component of the eukaryotic translation initiation factor 3 (eIF-3) complex. The eIF-3 complex interacts with pix.</text>
</comment>
<comment type="subcellular location">
    <subcellularLocation>
        <location evidence="2">Cytoplasm</location>
    </subcellularLocation>
</comment>
<comment type="similarity">
    <text evidence="2">Belongs to the eIF-3 subunit G family.</text>
</comment>
<accession>B4K7S5</accession>
<gene>
    <name evidence="1" type="primary">eIF3g2</name>
    <name evidence="2" type="synonym">eIF3-S4</name>
    <name evidence="1" type="synonym">eIF3gb</name>
    <name type="ORF">GI22232</name>
</gene>
<sequence>MKPTITSWADEVEADYVDGLPPSKEHVDGDYKHVTEYKFNDEGKKIKVVRSFKIEKKIVSRAVAKRRNWTKFGDSKLDKPGPNSYTTKVADEILMNYMGSKDFEHTQDPLDASKPIAKCRICNGEHWSVKCPYKGTSMDIESKAIAAATAAVGETNKAGKYVPPFLKEGGKGRERDDSSAVRISNLSESMTEDDLEELVKKIGPHTKMYLAREKNSGLCKGFAYVHFKYRKDAAEAIEILNGHGYDHLILSVEWSKPQN</sequence>
<reference key="1">
    <citation type="journal article" date="2007" name="Nature">
        <title>Evolution of genes and genomes on the Drosophila phylogeny.</title>
        <authorList>
            <consortium name="Drosophila 12 genomes consortium"/>
        </authorList>
    </citation>
    <scope>NUCLEOTIDE SEQUENCE [LARGE SCALE GENOMIC DNA]</scope>
    <source>
        <strain>Tucson 15081-1352.22</strain>
    </source>
</reference>